<feature type="chain" id="PRO_0000430670" description="B lymphocyte-induced maturation protein 1 homolog" evidence="9">
    <location>
        <begin position="1"/>
        <end position="817"/>
    </location>
</feature>
<feature type="domain" description="SET" evidence="2">
    <location>
        <begin position="103"/>
        <end position="241"/>
    </location>
</feature>
<feature type="zinc finger region" description="C2H2-type 1" evidence="1">
    <location>
        <begin position="508"/>
        <end position="530"/>
    </location>
</feature>
<feature type="zinc finger region" description="C2H2-type 2" evidence="1">
    <location>
        <begin position="536"/>
        <end position="558"/>
    </location>
</feature>
<feature type="zinc finger region" description="C2H2-type 3" evidence="1">
    <location>
        <begin position="564"/>
        <end position="586"/>
    </location>
</feature>
<feature type="zinc finger region" description="C2H2-type 4" evidence="1">
    <location>
        <begin position="592"/>
        <end position="614"/>
    </location>
</feature>
<feature type="zinc finger region" description="C2H2-type 5; degenerate" evidence="1">
    <location>
        <begin position="620"/>
        <end position="642"/>
    </location>
</feature>
<feature type="region of interest" description="Disordered" evidence="3">
    <location>
        <begin position="1"/>
        <end position="62"/>
    </location>
</feature>
<feature type="region of interest" description="Disordered" evidence="3">
    <location>
        <begin position="709"/>
        <end position="817"/>
    </location>
</feature>
<feature type="compositionally biased region" description="Low complexity" evidence="3">
    <location>
        <begin position="15"/>
        <end position="61"/>
    </location>
</feature>
<feature type="compositionally biased region" description="Low complexity" evidence="3">
    <location>
        <begin position="779"/>
        <end position="794"/>
    </location>
</feature>
<feature type="splice variant" id="VSP_057061" description="In isoform 2." evidence="9">
    <location>
        <begin position="685"/>
        <end position="700"/>
    </location>
</feature>
<reference evidence="10" key="1">
    <citation type="journal article" date="1998" name="Science">
        <title>Genome sequence of the nematode C. elegans: a platform for investigating biology.</title>
        <authorList>
            <consortium name="The C. elegans sequencing consortium"/>
        </authorList>
    </citation>
    <scope>NUCLEOTIDE SEQUENCE [LARGE SCALE GENOMIC DNA]</scope>
    <source>
        <strain evidence="10">Bristol N2</strain>
    </source>
</reference>
<reference key="2">
    <citation type="journal article" date="2011" name="PLoS Genet.">
        <title>A bow-tie genetic architecture for morphogenesis suggested by a genome-wide RNAi screen in Caenorhabditis elegans.</title>
        <authorList>
            <person name="Nelson M.D."/>
            <person name="Zhou E."/>
            <person name="Kiontke K."/>
            <person name="Fradin H."/>
            <person name="Maldonado G."/>
            <person name="Martin D."/>
            <person name="Shah K."/>
            <person name="Fitch D.H."/>
        </authorList>
    </citation>
    <scope>FUNCTION</scope>
    <scope>SUBCELLULAR LOCATION</scope>
    <scope>DISRUPTION PHENOTYPE</scope>
</reference>
<reference evidence="9" key="3">
    <citation type="journal article" date="2014" name="Dev. Cell">
        <title>DRE-1/FBXO11-dependent degradation of BLMP-1/BLIMP-1 governs C. elegans developmental timing and maturation.</title>
        <authorList>
            <person name="Horn M."/>
            <person name="Geisen C."/>
            <person name="Cermak L."/>
            <person name="Becker B."/>
            <person name="Nakamura S."/>
            <person name="Klein C."/>
            <person name="Pagano M."/>
            <person name="Antebi A."/>
        </authorList>
    </citation>
    <scope>FUNCTION</scope>
    <scope>INTERACTION WITH DRE-1</scope>
    <scope>DEVELOPMENTAL STAGE</scope>
    <scope>UBIQUITINATION</scope>
    <scope>DISRUPTION PHENOTYPE</scope>
</reference>
<reference evidence="9" key="4">
    <citation type="journal article" date="2014" name="PLoS Genet.">
        <title>BLMP-1/Blimp-1 regulates the spatiotemporal cell migration pattern in C. elegans.</title>
        <authorList>
            <person name="Huang T.F."/>
            <person name="Cho C.Y."/>
            <person name="Cheng Y.T."/>
            <person name="Huang J.W."/>
            <person name="Wu Y.Z."/>
            <person name="Yeh A.Y."/>
            <person name="Nishiwaki K."/>
            <person name="Chang S.C."/>
            <person name="Wu Y.C."/>
        </authorList>
    </citation>
    <scope>FUNCTION</scope>
    <scope>INTERACTION WITH DRE-1</scope>
    <scope>SUBCELLULAR LOCATION</scope>
    <scope>TISSUE SPECIFICITY</scope>
    <scope>DEVELOPMENTAL STAGE</scope>
    <scope>DISRUPTION PHENOTYPE</scope>
</reference>
<reference evidence="9" key="5">
    <citation type="journal article" date="2015" name="Biochim. Biophys. Acta">
        <title>Direct and positive regulation of Caenorhabditis elegans bed-3 by PRDM1/BLIMP1 ortholog BLMP-1.</title>
        <authorList>
            <person name="Yang J."/>
            <person name="Fong H.T."/>
            <person name="Xie Z."/>
            <person name="Tan J.W."/>
            <person name="Inoue T."/>
        </authorList>
    </citation>
    <scope>FUNCTION</scope>
    <scope>DISRUPTION PHENOTYPE</scope>
</reference>
<reference evidence="9" key="6">
    <citation type="journal article" date="2020" name="Biochim. Biophys. Acta">
        <title>LDB1 and the SWI/SNF complex participate in both transcriptional activation and repression by Caenorhabditis elegans BLIMP1/PRDM1.</title>
        <authorList>
            <person name="Fong H.T."/>
            <person name="Hagen T."/>
            <person name="Inoue T."/>
        </authorList>
    </citation>
    <scope>FUNCTION</scope>
    <scope>INTERACTION WITH LDB-1 AND HAM-3</scope>
    <scope>DISRUPTION PHENOTYPE</scope>
</reference>
<gene>
    <name evidence="11" type="primary">blmp-1</name>
    <name evidence="11" type="ORF">F25D7.3</name>
</gene>
<evidence type="ECO:0000255" key="1">
    <source>
        <dbReference type="PROSITE-ProRule" id="PRU00042"/>
    </source>
</evidence>
<evidence type="ECO:0000255" key="2">
    <source>
        <dbReference type="PROSITE-ProRule" id="PRU00190"/>
    </source>
</evidence>
<evidence type="ECO:0000256" key="3">
    <source>
        <dbReference type="SAM" id="MobiDB-lite"/>
    </source>
</evidence>
<evidence type="ECO:0000269" key="4">
    <source>
    </source>
</evidence>
<evidence type="ECO:0000269" key="5">
    <source>
    </source>
</evidence>
<evidence type="ECO:0000269" key="6">
    <source>
    </source>
</evidence>
<evidence type="ECO:0000269" key="7">
    <source>
    </source>
</evidence>
<evidence type="ECO:0000269" key="8">
    <source>
    </source>
</evidence>
<evidence type="ECO:0000305" key="9"/>
<evidence type="ECO:0000312" key="10">
    <source>
        <dbReference type="EMBL" id="CAB01695.1"/>
    </source>
</evidence>
<evidence type="ECO:0000312" key="11">
    <source>
        <dbReference type="WormBase" id="F25D7.3a"/>
    </source>
</evidence>
<evidence type="ECO:0000312" key="12">
    <source>
        <dbReference type="WormBase" id="F25D7.3b"/>
    </source>
</evidence>
<name>BLMP1_CAEEL</name>
<proteinExistence type="evidence at protein level"/>
<dbReference type="EMBL" id="BX284601">
    <property type="protein sequence ID" value="CAB01695.1"/>
    <property type="molecule type" value="Genomic_DNA"/>
</dbReference>
<dbReference type="EMBL" id="BX284601">
    <property type="protein sequence ID" value="CAV31771.1"/>
    <property type="molecule type" value="Genomic_DNA"/>
</dbReference>
<dbReference type="PIR" id="T21336">
    <property type="entry name" value="T21336"/>
</dbReference>
<dbReference type="RefSeq" id="NP_001251370.1">
    <molecule id="Q93560-1"/>
    <property type="nucleotide sequence ID" value="NM_001264441.2"/>
</dbReference>
<dbReference type="RefSeq" id="NP_001251371.1">
    <molecule id="Q93560-2"/>
    <property type="nucleotide sequence ID" value="NM_001264442.2"/>
</dbReference>
<dbReference type="SMR" id="Q93560"/>
<dbReference type="BioGRID" id="38333">
    <property type="interactions" value="15"/>
</dbReference>
<dbReference type="FunCoup" id="Q93560">
    <property type="interactions" value="621"/>
</dbReference>
<dbReference type="IntAct" id="Q93560">
    <property type="interactions" value="12"/>
</dbReference>
<dbReference type="STRING" id="6239.F25D7.3a.1"/>
<dbReference type="PaxDb" id="6239-F25D7.3a"/>
<dbReference type="EnsemblMetazoa" id="F25D7.3a.1">
    <molecule id="Q93560-1"/>
    <property type="protein sequence ID" value="F25D7.3a.1"/>
    <property type="gene ID" value="WBGene00003847"/>
</dbReference>
<dbReference type="EnsemblMetazoa" id="F25D7.3b.1">
    <molecule id="Q93560-2"/>
    <property type="protein sequence ID" value="F25D7.3b.1"/>
    <property type="gene ID" value="WBGene00003847"/>
</dbReference>
<dbReference type="GeneID" id="172917"/>
<dbReference type="KEGG" id="cel:CELE_F25D7.3"/>
<dbReference type="UCSC" id="F25D7.3">
    <molecule id="Q93560-1"/>
    <property type="organism name" value="c. elegans"/>
</dbReference>
<dbReference type="AGR" id="WB:WBGene00003847"/>
<dbReference type="CTD" id="172917"/>
<dbReference type="WormBase" id="F25D7.3a">
    <molecule id="Q93560-1"/>
    <property type="protein sequence ID" value="CE09631"/>
    <property type="gene ID" value="WBGene00003847"/>
    <property type="gene designation" value="blmp-1"/>
</dbReference>
<dbReference type="WormBase" id="F25D7.3b">
    <molecule id="Q93560-2"/>
    <property type="protein sequence ID" value="CE43409"/>
    <property type="gene ID" value="WBGene00003847"/>
    <property type="gene designation" value="blmp-1"/>
</dbReference>
<dbReference type="eggNOG" id="KOG2461">
    <property type="taxonomic scope" value="Eukaryota"/>
</dbReference>
<dbReference type="GeneTree" id="ENSGT00940000154798"/>
<dbReference type="HOGENOM" id="CLU_018020_0_0_1"/>
<dbReference type="InParanoid" id="Q93560"/>
<dbReference type="OMA" id="AELCIFH"/>
<dbReference type="OrthoDB" id="7327383at2759"/>
<dbReference type="PhylomeDB" id="Q93560"/>
<dbReference type="SignaLink" id="Q93560"/>
<dbReference type="PRO" id="PR:Q93560"/>
<dbReference type="Proteomes" id="UP000001940">
    <property type="component" value="Chromosome I"/>
</dbReference>
<dbReference type="Bgee" id="WBGene00003847">
    <property type="expression patterns" value="Expressed in embryo and 3 other cell types or tissues"/>
</dbReference>
<dbReference type="GO" id="GO:0005737">
    <property type="term" value="C:cytoplasm"/>
    <property type="evidence" value="ECO:0000314"/>
    <property type="project" value="WormBase"/>
</dbReference>
<dbReference type="GO" id="GO:0005634">
    <property type="term" value="C:nucleus"/>
    <property type="evidence" value="ECO:0000314"/>
    <property type="project" value="UniProtKB"/>
</dbReference>
<dbReference type="GO" id="GO:0003700">
    <property type="term" value="F:DNA-binding transcription factor activity"/>
    <property type="evidence" value="ECO:0000318"/>
    <property type="project" value="GO_Central"/>
</dbReference>
<dbReference type="GO" id="GO:0001227">
    <property type="term" value="F:DNA-binding transcription repressor activity, RNA polymerase II-specific"/>
    <property type="evidence" value="ECO:0007669"/>
    <property type="project" value="InterPro"/>
</dbReference>
<dbReference type="GO" id="GO:0000978">
    <property type="term" value="F:RNA polymerase II cis-regulatory region sequence-specific DNA binding"/>
    <property type="evidence" value="ECO:0000314"/>
    <property type="project" value="WormBase"/>
</dbReference>
<dbReference type="GO" id="GO:0008270">
    <property type="term" value="F:zinc ion binding"/>
    <property type="evidence" value="ECO:0007669"/>
    <property type="project" value="UniProtKB-KW"/>
</dbReference>
<dbReference type="GO" id="GO:0045165">
    <property type="term" value="P:cell fate commitment"/>
    <property type="evidence" value="ECO:0000318"/>
    <property type="project" value="GO_Central"/>
</dbReference>
<dbReference type="GO" id="GO:1903355">
    <property type="term" value="P:negative regulation of distal tip cell migration"/>
    <property type="evidence" value="ECO:0000315"/>
    <property type="project" value="UniProtKB"/>
</dbReference>
<dbReference type="GO" id="GO:0000122">
    <property type="term" value="P:negative regulation of transcription by RNA polymerase II"/>
    <property type="evidence" value="ECO:0000315"/>
    <property type="project" value="UniProtKB"/>
</dbReference>
<dbReference type="GO" id="GO:1904747">
    <property type="term" value="P:positive regulation of apoptotic process involved in development"/>
    <property type="evidence" value="ECO:0000315"/>
    <property type="project" value="WormBase"/>
</dbReference>
<dbReference type="GO" id="GO:0110039">
    <property type="term" value="P:positive regulation of nematode male tail tip morphogenesis"/>
    <property type="evidence" value="ECO:0000315"/>
    <property type="project" value="UniProtKB"/>
</dbReference>
<dbReference type="GO" id="GO:0045944">
    <property type="term" value="P:positive regulation of transcription by RNA polymerase II"/>
    <property type="evidence" value="ECO:0000315"/>
    <property type="project" value="WormBase"/>
</dbReference>
<dbReference type="GO" id="GO:0090444">
    <property type="term" value="P:regulation of nematode larval development, heterochronic"/>
    <property type="evidence" value="ECO:0000315"/>
    <property type="project" value="UniProtKB"/>
</dbReference>
<dbReference type="GO" id="GO:0006357">
    <property type="term" value="P:regulation of transcription by RNA polymerase II"/>
    <property type="evidence" value="ECO:0000318"/>
    <property type="project" value="GO_Central"/>
</dbReference>
<dbReference type="CDD" id="cd19187">
    <property type="entry name" value="PR-SET_PRDM1"/>
    <property type="match status" value="1"/>
</dbReference>
<dbReference type="FunFam" id="2.170.270.10:FF:000036">
    <property type="entry name" value="Blimp-1, isoform A"/>
    <property type="match status" value="1"/>
</dbReference>
<dbReference type="FunFam" id="3.30.160.60:FF:000833">
    <property type="entry name" value="PR domain zinc finger protein"/>
    <property type="match status" value="1"/>
</dbReference>
<dbReference type="FunFam" id="3.30.160.60:FF:000211">
    <property type="entry name" value="PR domain zinc finger protein 1"/>
    <property type="match status" value="1"/>
</dbReference>
<dbReference type="FunFam" id="3.30.160.60:FF:000436">
    <property type="entry name" value="PR domain zinc finger protein 4"/>
    <property type="match status" value="1"/>
</dbReference>
<dbReference type="FunFam" id="3.30.160.60:FF:000744">
    <property type="entry name" value="zinc finger E-box-binding homeobox 1"/>
    <property type="match status" value="1"/>
</dbReference>
<dbReference type="FunFam" id="3.30.160.60:FF:000446">
    <property type="entry name" value="Zinc finger protein"/>
    <property type="match status" value="1"/>
</dbReference>
<dbReference type="Gene3D" id="3.30.160.60">
    <property type="entry name" value="Classic Zinc Finger"/>
    <property type="match status" value="5"/>
</dbReference>
<dbReference type="Gene3D" id="2.170.270.10">
    <property type="entry name" value="SET domain"/>
    <property type="match status" value="1"/>
</dbReference>
<dbReference type="InterPro" id="IPR044413">
    <property type="entry name" value="PRDM1_PR-SET"/>
</dbReference>
<dbReference type="InterPro" id="IPR001214">
    <property type="entry name" value="SET_dom"/>
</dbReference>
<dbReference type="InterPro" id="IPR046341">
    <property type="entry name" value="SET_dom_sf"/>
</dbReference>
<dbReference type="InterPro" id="IPR050331">
    <property type="entry name" value="Zinc_finger"/>
</dbReference>
<dbReference type="InterPro" id="IPR036236">
    <property type="entry name" value="Znf_C2H2_sf"/>
</dbReference>
<dbReference type="InterPro" id="IPR013087">
    <property type="entry name" value="Znf_C2H2_type"/>
</dbReference>
<dbReference type="PANTHER" id="PTHR16515">
    <property type="entry name" value="PR DOMAIN ZINC FINGER PROTEIN"/>
    <property type="match status" value="1"/>
</dbReference>
<dbReference type="PANTHER" id="PTHR16515:SF59">
    <property type="entry name" value="PR DOMAIN ZINC FINGER PROTEIN 1"/>
    <property type="match status" value="1"/>
</dbReference>
<dbReference type="Pfam" id="PF21549">
    <property type="entry name" value="PRDM2_PR"/>
    <property type="match status" value="1"/>
</dbReference>
<dbReference type="Pfam" id="PF00096">
    <property type="entry name" value="zf-C2H2"/>
    <property type="match status" value="5"/>
</dbReference>
<dbReference type="SMART" id="SM00317">
    <property type="entry name" value="SET"/>
    <property type="match status" value="1"/>
</dbReference>
<dbReference type="SMART" id="SM00355">
    <property type="entry name" value="ZnF_C2H2"/>
    <property type="match status" value="5"/>
</dbReference>
<dbReference type="SUPFAM" id="SSF57667">
    <property type="entry name" value="beta-beta-alpha zinc fingers"/>
    <property type="match status" value="3"/>
</dbReference>
<dbReference type="PROSITE" id="PS50280">
    <property type="entry name" value="SET"/>
    <property type="match status" value="1"/>
</dbReference>
<dbReference type="PROSITE" id="PS00028">
    <property type="entry name" value="ZINC_FINGER_C2H2_1"/>
    <property type="match status" value="4"/>
</dbReference>
<dbReference type="PROSITE" id="PS50157">
    <property type="entry name" value="ZINC_FINGER_C2H2_2"/>
    <property type="match status" value="5"/>
</dbReference>
<protein>
    <recommendedName>
        <fullName evidence="11">B lymphocyte-induced maturation protein 1 homolog</fullName>
    </recommendedName>
</protein>
<comment type="function">
    <text evidence="4 5 6 7">Transcription factor which binds to enhancer elements in the promoter region of genes (PubMed:26234645). Regulates the expression of the transcription factor bed-3 to control vulval development (PubMed:26234645, PubMed:32417234). Promotes terminal differentiation in the hypodermis and is involved in regulation of gonadal outgrowth and entry into the dauer stage (PubMed:24613396). Regulates the timing of dorsalward migration of the distal tip cells of the hermaphrodite gonad by inhibiting precocious unc-5 and lin-29 expression which in turn prevents early dorsalward turning (PubMed:24968003). Plays a role in male tail tip morphogenesis (PubMed:21408209).</text>
</comment>
<comment type="subunit">
    <text evidence="5 6 8">Interacts with dre-1; the interaction targets blmp-1 for proteasomal degradation (PubMed:24613396, PubMed:24968003). Interacts with ldb-1 and ham-3 (PubMed:32417234).</text>
</comment>
<comment type="subcellular location">
    <subcellularLocation>
        <location evidence="4 6">Nucleus</location>
    </subcellularLocation>
    <subcellularLocation>
        <location evidence="4">Cytoplasm</location>
    </subcellularLocation>
    <text evidence="4">Localizes to the nucleus and cytoplasm in hyp8-11 tail tip cells throughout development, but cytoplasmic localization is most prominent during male tail tip retraction.</text>
</comment>
<comment type="alternative products">
    <event type="alternative splicing"/>
    <isoform>
        <id>Q93560-1</id>
        <name evidence="11">1</name>
        <sequence type="displayed"/>
    </isoform>
    <isoform>
        <id>Q93560-2</id>
        <name evidence="12">2</name>
        <sequence type="described" ref="VSP_057061"/>
    </isoform>
</comment>
<comment type="tissue specificity">
    <text evidence="6">Expressed in hypodermal, vulval, intestinal and distal tip cells.</text>
</comment>
<comment type="developmental stage">
    <text evidence="5 6">In distal tip cells, expressed from mid-L2 when gonadal outgrowth initiates (PubMed:24613396). By mid-L3, just prior to the dorsal gonadal turn, levels drop dramatically (PubMed:24968003). In seam and hypodermal cells, levels are largely constant throughout larval development except for a transient peak early in L4 (PubMed:24613396).</text>
</comment>
<comment type="PTM">
    <text evidence="5">Ubiquitinated by the SCF(dre-1) complex, leading to its degradation by the proteasome.</text>
</comment>
<comment type="disruption phenotype">
    <text evidence="4 5 6 7 8">Gonadal migration defects with premature dorsal turning of distal tip cells in the hermaphrodite gonad (PubMed:24613396, PubMed:24968003). Defective dauer formation, shortened lifespan and retarded terminal differentiation of seam cells with incomplete adult alae synthesis (PubMed:24613396). Suppresses the precocious seam cell terminal differentiation and gonadal migration defects seen in dre-1 mutants (PubMed:24613396). Weak dumpy phenotype and partially penetrant embryonic lethality (PubMed:24968003). Reduced expression of the transcription factor bed-3 which is involved in vulval development and failed division of vulval precursor cell descendents (PubMed:26234645). RNAi-mediated knockdown impairs the expression of several hypodermis-specific genes; reduces levels of clo-124 mRNA and increases levels of lin-29 mRNA (PubMed:32417234). RNAi-mediated knockdown results in the precocious onset of tail tip retraction resulting in over-retracted and shortened adult male tails (also known as the Ore phenotype) (PubMed:21408209).</text>
</comment>
<sequence>MGQGSGDDGVPPAPFSSAAAAAHSPPHSPLSVGVSSASSATSSSSTPPSSTSPAGVSASGARNVETDWKQSGDENLAELCIFHVPDKSVSLPNPKRAECTLPMNLILKSSSKNRKKSSIWSSDHIPRGVRFGPLVGEIRLVDVDTALVCPAEASMAGGGPAQEDVPFDEAPEEWKIYSPSGGRLNKTICVKDDARSNWMKYVAAAEEEDFQNLVAAQIGNDIYFYTVKKIEANTELSFWFSRDYARKLNYSTRPYVRVRRPATQLIPSAPPASASTAIASLAETIVAIDYSVKKLIESPIDTLSTDASSASDEEMIDVEEQESCTRPVAEVTRPNVIQNPVVRPVATKVNNFPGIPVRLGNFYASPLVDFKEFMRKSLQLKLVDTSMFVSPVAQTTAAITATGGRSGQPIDVQPVLAATAGAHFGNYAAIYGSQDFQHELSKPLYTSASPAFGGGGGMGGGFGMGGSAHTSSFHQLPFVNHSSSSHNDSSFNGVPNYVQQQENGKTRYACKDCNKTFGQLSNLKVHVRTHTGERPFKCEICTKEFTQLAHLQKHHLVHTGERPHRCDICDKRFSSTSNLKTHLRLHNGQKPYTCDVCDAKFTQYVHLRLHKRLHANERPYSCGTCGKKYISPSGLRTHWKTTTCKEEDMKDSMRDDLMDIKGEIDEGSMSGSGYGNLGIFENTLNSELKRPLMPIETIYSKYNLPNASLLGQGPSGMQEQQAPPPTSQQQQHMMYGNTMGHMGQGSHLQGPPPPPQHFQMDHSGMQNGGGIPHQHQLIQGGPSSGSGQQQHPQHNGIHRLPDLKNPLLPSLGLPHYP</sequence>
<organism evidence="10">
    <name type="scientific">Caenorhabditis elegans</name>
    <dbReference type="NCBI Taxonomy" id="6239"/>
    <lineage>
        <taxon>Eukaryota</taxon>
        <taxon>Metazoa</taxon>
        <taxon>Ecdysozoa</taxon>
        <taxon>Nematoda</taxon>
        <taxon>Chromadorea</taxon>
        <taxon>Rhabditida</taxon>
        <taxon>Rhabditina</taxon>
        <taxon>Rhabditomorpha</taxon>
        <taxon>Rhabditoidea</taxon>
        <taxon>Rhabditidae</taxon>
        <taxon>Peloderinae</taxon>
        <taxon>Caenorhabditis</taxon>
    </lineage>
</organism>
<accession>Q93560</accession>
<accession>B7WN98</accession>
<keyword id="KW-0025">Alternative splicing</keyword>
<keyword id="KW-0963">Cytoplasm</keyword>
<keyword id="KW-0217">Developmental protein</keyword>
<keyword id="KW-0479">Metal-binding</keyword>
<keyword id="KW-0539">Nucleus</keyword>
<keyword id="KW-1185">Reference proteome</keyword>
<keyword id="KW-0677">Repeat</keyword>
<keyword id="KW-0804">Transcription</keyword>
<keyword id="KW-0805">Transcription regulation</keyword>
<keyword id="KW-0832">Ubl conjugation</keyword>
<keyword id="KW-0862">Zinc</keyword>
<keyword id="KW-0863">Zinc-finger</keyword>